<organism>
    <name type="scientific">Burkholderia mallei (strain NCTC 10229)</name>
    <dbReference type="NCBI Taxonomy" id="412022"/>
    <lineage>
        <taxon>Bacteria</taxon>
        <taxon>Pseudomonadati</taxon>
        <taxon>Pseudomonadota</taxon>
        <taxon>Betaproteobacteria</taxon>
        <taxon>Burkholderiales</taxon>
        <taxon>Burkholderiaceae</taxon>
        <taxon>Burkholderia</taxon>
        <taxon>pseudomallei group</taxon>
    </lineage>
</organism>
<reference key="1">
    <citation type="journal article" date="2010" name="Genome Biol. Evol.">
        <title>Continuing evolution of Burkholderia mallei through genome reduction and large-scale rearrangements.</title>
        <authorList>
            <person name="Losada L."/>
            <person name="Ronning C.M."/>
            <person name="DeShazer D."/>
            <person name="Woods D."/>
            <person name="Fedorova N."/>
            <person name="Kim H.S."/>
            <person name="Shabalina S.A."/>
            <person name="Pearson T.R."/>
            <person name="Brinkac L."/>
            <person name="Tan P."/>
            <person name="Nandi T."/>
            <person name="Crabtree J."/>
            <person name="Badger J."/>
            <person name="Beckstrom-Sternberg S."/>
            <person name="Saqib M."/>
            <person name="Schutzer S.E."/>
            <person name="Keim P."/>
            <person name="Nierman W.C."/>
        </authorList>
    </citation>
    <scope>NUCLEOTIDE SEQUENCE [LARGE SCALE GENOMIC DNA]</scope>
    <source>
        <strain>NCTC 10229</strain>
    </source>
</reference>
<accession>A2RWD7</accession>
<proteinExistence type="inferred from homology"/>
<dbReference type="EMBL" id="CP000545">
    <property type="protein sequence ID" value="ABM99819.1"/>
    <property type="molecule type" value="Genomic_DNA"/>
</dbReference>
<dbReference type="RefSeq" id="WP_004202513.1">
    <property type="nucleotide sequence ID" value="NC_008835.1"/>
</dbReference>
<dbReference type="SMR" id="A2RWD7"/>
<dbReference type="GeneID" id="93063521"/>
<dbReference type="KEGG" id="bml:BMA10229_0181"/>
<dbReference type="HOGENOM" id="CLU_069356_15_4_4"/>
<dbReference type="UniPathway" id="UPA00529"/>
<dbReference type="Proteomes" id="UP000002283">
    <property type="component" value="Chromosome II"/>
</dbReference>
<dbReference type="GO" id="GO:0003700">
    <property type="term" value="F:DNA-binding transcription factor activity"/>
    <property type="evidence" value="ECO:0007669"/>
    <property type="project" value="UniProtKB-UniRule"/>
</dbReference>
<dbReference type="GO" id="GO:0000976">
    <property type="term" value="F:transcription cis-regulatory region binding"/>
    <property type="evidence" value="ECO:0007669"/>
    <property type="project" value="TreeGrafter"/>
</dbReference>
<dbReference type="GO" id="GO:0019285">
    <property type="term" value="P:glycine betaine biosynthetic process from choline"/>
    <property type="evidence" value="ECO:0007669"/>
    <property type="project" value="UniProtKB-UniRule"/>
</dbReference>
<dbReference type="GO" id="GO:0045892">
    <property type="term" value="P:negative regulation of DNA-templated transcription"/>
    <property type="evidence" value="ECO:0007669"/>
    <property type="project" value="UniProtKB-UniRule"/>
</dbReference>
<dbReference type="Gene3D" id="1.10.357.10">
    <property type="entry name" value="Tetracycline Repressor, domain 2"/>
    <property type="match status" value="1"/>
</dbReference>
<dbReference type="HAMAP" id="MF_00768">
    <property type="entry name" value="HTH_type_BetI"/>
    <property type="match status" value="1"/>
</dbReference>
<dbReference type="InterPro" id="IPR039538">
    <property type="entry name" value="BetI_C"/>
</dbReference>
<dbReference type="InterPro" id="IPR023772">
    <property type="entry name" value="DNA-bd_HTH_TetR-type_CS"/>
</dbReference>
<dbReference type="InterPro" id="IPR009057">
    <property type="entry name" value="Homeodomain-like_sf"/>
</dbReference>
<dbReference type="InterPro" id="IPR050109">
    <property type="entry name" value="HTH-type_TetR-like_transc_reg"/>
</dbReference>
<dbReference type="InterPro" id="IPR001647">
    <property type="entry name" value="HTH_TetR"/>
</dbReference>
<dbReference type="InterPro" id="IPR036271">
    <property type="entry name" value="Tet_transcr_reg_TetR-rel_C_sf"/>
</dbReference>
<dbReference type="InterPro" id="IPR017757">
    <property type="entry name" value="Tscrpt_rep_BetI"/>
</dbReference>
<dbReference type="NCBIfam" id="TIGR03384">
    <property type="entry name" value="betaine_BetI"/>
    <property type="match status" value="1"/>
</dbReference>
<dbReference type="NCBIfam" id="NF001978">
    <property type="entry name" value="PRK00767.1"/>
    <property type="match status" value="1"/>
</dbReference>
<dbReference type="PANTHER" id="PTHR30055:SF234">
    <property type="entry name" value="HTH-TYPE TRANSCRIPTIONAL REGULATOR BETI"/>
    <property type="match status" value="1"/>
</dbReference>
<dbReference type="PANTHER" id="PTHR30055">
    <property type="entry name" value="HTH-TYPE TRANSCRIPTIONAL REGULATOR RUTR"/>
    <property type="match status" value="1"/>
</dbReference>
<dbReference type="Pfam" id="PF13977">
    <property type="entry name" value="TetR_C_6"/>
    <property type="match status" value="1"/>
</dbReference>
<dbReference type="Pfam" id="PF00440">
    <property type="entry name" value="TetR_N"/>
    <property type="match status" value="1"/>
</dbReference>
<dbReference type="SUPFAM" id="SSF46689">
    <property type="entry name" value="Homeodomain-like"/>
    <property type="match status" value="1"/>
</dbReference>
<dbReference type="SUPFAM" id="SSF48498">
    <property type="entry name" value="Tetracyclin repressor-like, C-terminal domain"/>
    <property type="match status" value="1"/>
</dbReference>
<dbReference type="PROSITE" id="PS01081">
    <property type="entry name" value="HTH_TETR_1"/>
    <property type="match status" value="1"/>
</dbReference>
<dbReference type="PROSITE" id="PS50977">
    <property type="entry name" value="HTH_TETR_2"/>
    <property type="match status" value="1"/>
</dbReference>
<comment type="function">
    <text evidence="1">Repressor involved in the biosynthesis of the osmoprotectant glycine betaine. It represses transcription of the choline transporter BetT and the genes of BetAB involved in the synthesis of glycine betaine (By similarity).</text>
</comment>
<comment type="pathway">
    <text>Amine and polyamine biosynthesis; betaine biosynthesis via choline pathway [regulation].</text>
</comment>
<evidence type="ECO:0000250" key="1"/>
<evidence type="ECO:0000255" key="2">
    <source>
        <dbReference type="HAMAP-Rule" id="MF_00768"/>
    </source>
</evidence>
<protein>
    <recommendedName>
        <fullName evidence="2">HTH-type transcriptional regulator BetI</fullName>
    </recommendedName>
</protein>
<gene>
    <name evidence="2" type="primary">betI</name>
    <name type="ordered locus">BMA10229_0181</name>
</gene>
<name>BETI_BURM9</name>
<keyword id="KW-0238">DNA-binding</keyword>
<keyword id="KW-0678">Repressor</keyword>
<keyword id="KW-0804">Transcription</keyword>
<keyword id="KW-0805">Transcription regulation</keyword>
<sequence length="195" mass="21490">MPKLGMREIRRAQLIDATLRSIDEAGLPGTTLASVAQRANISTGIVSHYFGDKDGLLEATMRHVLRDLWAATTRRRAAASDAPRARLRAVVAANFDDTQISAPVMKTWLAFWSQSMHEPTLRRLQRVNTRRLHSNLCAEFAKTLPRARAREAASGLAALIDGLWLRGALAGEPLDTKAALKLANDYIDQLLAPRV</sequence>
<feature type="chain" id="PRO_1000083556" description="HTH-type transcriptional regulator BetI">
    <location>
        <begin position="1"/>
        <end position="195"/>
    </location>
</feature>
<feature type="domain" description="HTH tetR-type" evidence="2">
    <location>
        <begin position="8"/>
        <end position="68"/>
    </location>
</feature>
<feature type="DNA-binding region" description="H-T-H motif" evidence="2">
    <location>
        <begin position="31"/>
        <end position="50"/>
    </location>
</feature>